<gene>
    <name evidence="1" type="primary">uppP</name>
    <name type="synonym">bacA</name>
    <name type="synonym">upk</name>
    <name type="ordered locus">pc0471</name>
</gene>
<proteinExistence type="inferred from homology"/>
<protein>
    <recommendedName>
        <fullName evidence="1">Undecaprenyl-diphosphatase</fullName>
        <ecNumber evidence="1">3.6.1.27</ecNumber>
    </recommendedName>
    <alternativeName>
        <fullName evidence="1">Bacitracin resistance protein</fullName>
    </alternativeName>
    <alternativeName>
        <fullName evidence="1">Undecaprenyl pyrophosphate phosphatase</fullName>
    </alternativeName>
</protein>
<feature type="chain" id="PRO_0000151173" description="Undecaprenyl-diphosphatase">
    <location>
        <begin position="1"/>
        <end position="257"/>
    </location>
</feature>
<feature type="transmembrane region" description="Helical" evidence="1">
    <location>
        <begin position="42"/>
        <end position="62"/>
    </location>
</feature>
<feature type="transmembrane region" description="Helical" evidence="1">
    <location>
        <begin position="76"/>
        <end position="96"/>
    </location>
</feature>
<feature type="transmembrane region" description="Helical" evidence="1">
    <location>
        <begin position="103"/>
        <end position="123"/>
    </location>
</feature>
<feature type="transmembrane region" description="Helical" evidence="1">
    <location>
        <begin position="136"/>
        <end position="156"/>
    </location>
</feature>
<feature type="transmembrane region" description="Helical" evidence="1">
    <location>
        <begin position="172"/>
        <end position="192"/>
    </location>
</feature>
<feature type="transmembrane region" description="Helical" evidence="1">
    <location>
        <begin position="209"/>
        <end position="229"/>
    </location>
</feature>
<feature type="transmembrane region" description="Helical" evidence="1">
    <location>
        <begin position="237"/>
        <end position="257"/>
    </location>
</feature>
<keyword id="KW-0046">Antibiotic resistance</keyword>
<keyword id="KW-0997">Cell inner membrane</keyword>
<keyword id="KW-1003">Cell membrane</keyword>
<keyword id="KW-0133">Cell shape</keyword>
<keyword id="KW-0961">Cell wall biogenesis/degradation</keyword>
<keyword id="KW-0378">Hydrolase</keyword>
<keyword id="KW-0472">Membrane</keyword>
<keyword id="KW-0573">Peptidoglycan synthesis</keyword>
<keyword id="KW-1185">Reference proteome</keyword>
<keyword id="KW-0812">Transmembrane</keyword>
<keyword id="KW-1133">Transmembrane helix</keyword>
<evidence type="ECO:0000255" key="1">
    <source>
        <dbReference type="HAMAP-Rule" id="MF_01006"/>
    </source>
</evidence>
<name>UPPP_PARUW</name>
<reference key="1">
    <citation type="journal article" date="2004" name="Science">
        <title>Illuminating the evolutionary history of chlamydiae.</title>
        <authorList>
            <person name="Horn M."/>
            <person name="Collingro A."/>
            <person name="Schmitz-Esser S."/>
            <person name="Beier C.L."/>
            <person name="Purkhold U."/>
            <person name="Fartmann B."/>
            <person name="Brandt P."/>
            <person name="Nyakatura G.J."/>
            <person name="Droege M."/>
            <person name="Frishman D."/>
            <person name="Rattei T."/>
            <person name="Mewes H.-W."/>
            <person name="Wagner M."/>
        </authorList>
    </citation>
    <scope>NUCLEOTIDE SEQUENCE [LARGE SCALE GENOMIC DNA]</scope>
    <source>
        <strain>UWE25</strain>
    </source>
</reference>
<accession>Q6ME04</accession>
<sequence>MTIWEAFFLGLIQGVTEFLPISSSGHLELAQYFLGFEKLQSYVLFNLICHLGTLGSILYMFLPQIKQSLITERNHIFHIILGTLPLFPLVLILKPIKATFDQPQYLGLCFLFSAALLFSGVYFRLQMQKKHSLRDCLTIGLFQAVAVLPGISRSGATISAARLLGWDKQDAIQFSFLLAIPAILGGTFLEIWQFLKLPASEIPPIEIGQFLTGFITSFMIGCASLWAVIQMMTQDKWVYFAWYCLFIGIATTLYFQM</sequence>
<comment type="function">
    <text evidence="1">Catalyzes the dephosphorylation of undecaprenyl diphosphate (UPP). Confers resistance to bacitracin.</text>
</comment>
<comment type="catalytic activity">
    <reaction evidence="1">
        <text>di-trans,octa-cis-undecaprenyl diphosphate + H2O = di-trans,octa-cis-undecaprenyl phosphate + phosphate + H(+)</text>
        <dbReference type="Rhea" id="RHEA:28094"/>
        <dbReference type="ChEBI" id="CHEBI:15377"/>
        <dbReference type="ChEBI" id="CHEBI:15378"/>
        <dbReference type="ChEBI" id="CHEBI:43474"/>
        <dbReference type="ChEBI" id="CHEBI:58405"/>
        <dbReference type="ChEBI" id="CHEBI:60392"/>
        <dbReference type="EC" id="3.6.1.27"/>
    </reaction>
</comment>
<comment type="subcellular location">
    <subcellularLocation>
        <location evidence="1">Cell inner membrane</location>
        <topology evidence="1">Multi-pass membrane protein</topology>
    </subcellularLocation>
</comment>
<comment type="miscellaneous">
    <text>Bacitracin is thought to be involved in the inhibition of peptidoglycan synthesis by sequestering undecaprenyl diphosphate, thereby reducing the pool of lipid carrier available.</text>
</comment>
<comment type="similarity">
    <text evidence="1">Belongs to the UppP family.</text>
</comment>
<organism>
    <name type="scientific">Protochlamydia amoebophila (strain UWE25)</name>
    <dbReference type="NCBI Taxonomy" id="264201"/>
    <lineage>
        <taxon>Bacteria</taxon>
        <taxon>Pseudomonadati</taxon>
        <taxon>Chlamydiota</taxon>
        <taxon>Chlamydiia</taxon>
        <taxon>Parachlamydiales</taxon>
        <taxon>Parachlamydiaceae</taxon>
        <taxon>Candidatus Protochlamydia</taxon>
    </lineage>
</organism>
<dbReference type="EC" id="3.6.1.27" evidence="1"/>
<dbReference type="EMBL" id="BX908798">
    <property type="protein sequence ID" value="CAF23195.1"/>
    <property type="molecule type" value="Genomic_DNA"/>
</dbReference>
<dbReference type="RefSeq" id="WP_011175021.1">
    <property type="nucleotide sequence ID" value="NC_005861.2"/>
</dbReference>
<dbReference type="SMR" id="Q6ME04"/>
<dbReference type="STRING" id="264201.pc0471"/>
<dbReference type="KEGG" id="pcu:PC_RS02290"/>
<dbReference type="eggNOG" id="COG1968">
    <property type="taxonomic scope" value="Bacteria"/>
</dbReference>
<dbReference type="HOGENOM" id="CLU_060296_1_2_0"/>
<dbReference type="OrthoDB" id="9808289at2"/>
<dbReference type="Proteomes" id="UP000000529">
    <property type="component" value="Chromosome"/>
</dbReference>
<dbReference type="GO" id="GO:0005886">
    <property type="term" value="C:plasma membrane"/>
    <property type="evidence" value="ECO:0007669"/>
    <property type="project" value="UniProtKB-SubCell"/>
</dbReference>
<dbReference type="GO" id="GO:0050380">
    <property type="term" value="F:undecaprenyl-diphosphatase activity"/>
    <property type="evidence" value="ECO:0007669"/>
    <property type="project" value="UniProtKB-UniRule"/>
</dbReference>
<dbReference type="GO" id="GO:0071555">
    <property type="term" value="P:cell wall organization"/>
    <property type="evidence" value="ECO:0007669"/>
    <property type="project" value="UniProtKB-KW"/>
</dbReference>
<dbReference type="GO" id="GO:0009252">
    <property type="term" value="P:peptidoglycan biosynthetic process"/>
    <property type="evidence" value="ECO:0007669"/>
    <property type="project" value="UniProtKB-KW"/>
</dbReference>
<dbReference type="GO" id="GO:0008360">
    <property type="term" value="P:regulation of cell shape"/>
    <property type="evidence" value="ECO:0007669"/>
    <property type="project" value="UniProtKB-KW"/>
</dbReference>
<dbReference type="GO" id="GO:0046677">
    <property type="term" value="P:response to antibiotic"/>
    <property type="evidence" value="ECO:0007669"/>
    <property type="project" value="UniProtKB-UniRule"/>
</dbReference>
<dbReference type="HAMAP" id="MF_01006">
    <property type="entry name" value="Undec_diphosphatase"/>
    <property type="match status" value="1"/>
</dbReference>
<dbReference type="InterPro" id="IPR003824">
    <property type="entry name" value="UppP"/>
</dbReference>
<dbReference type="PANTHER" id="PTHR30622">
    <property type="entry name" value="UNDECAPRENYL-DIPHOSPHATASE"/>
    <property type="match status" value="1"/>
</dbReference>
<dbReference type="PANTHER" id="PTHR30622:SF2">
    <property type="entry name" value="UNDECAPRENYL-DIPHOSPHATASE"/>
    <property type="match status" value="1"/>
</dbReference>
<dbReference type="Pfam" id="PF02673">
    <property type="entry name" value="BacA"/>
    <property type="match status" value="1"/>
</dbReference>